<gene>
    <name evidence="1" type="primary">fabZ</name>
    <name type="ordered locus">BR1152</name>
    <name type="ordered locus">BS1330_I1148</name>
</gene>
<protein>
    <recommendedName>
        <fullName evidence="1">3-hydroxyacyl-[acyl-carrier-protein] dehydratase FabZ</fullName>
        <ecNumber evidence="1">4.2.1.59</ecNumber>
    </recommendedName>
    <alternativeName>
        <fullName evidence="1">(3R)-hydroxymyristoyl-[acyl-carrier-protein] dehydratase</fullName>
        <shortName evidence="1">(3R)-hydroxymyristoyl-ACP dehydrase</shortName>
    </alternativeName>
    <alternativeName>
        <fullName evidence="1">Beta-hydroxyacyl-ACP dehydratase</fullName>
    </alternativeName>
</protein>
<keyword id="KW-0963">Cytoplasm</keyword>
<keyword id="KW-0441">Lipid A biosynthesis</keyword>
<keyword id="KW-0444">Lipid biosynthesis</keyword>
<keyword id="KW-0443">Lipid metabolism</keyword>
<keyword id="KW-0456">Lyase</keyword>
<sequence>MSDDNQTKLEAADIQALLAVLPHRYPFLLIDRIVDIDGDVSATGIKNVTINEPHFTGHFPENPIMPGVLIVEAMAQTAGAISLLQRKTGRPGVVYFMTIDNAKFRRPVVPGDRLLLHVKKIKQRANISKYECVAEVDGVKVAEAEVAAMISVADENL</sequence>
<proteinExistence type="inferred from homology"/>
<reference key="1">
    <citation type="journal article" date="2002" name="Proc. Natl. Acad. Sci. U.S.A.">
        <title>The Brucella suis genome reveals fundamental similarities between animal and plant pathogens and symbionts.</title>
        <authorList>
            <person name="Paulsen I.T."/>
            <person name="Seshadri R."/>
            <person name="Nelson K.E."/>
            <person name="Eisen J.A."/>
            <person name="Heidelberg J.F."/>
            <person name="Read T.D."/>
            <person name="Dodson R.J."/>
            <person name="Umayam L.A."/>
            <person name="Brinkac L.M."/>
            <person name="Beanan M.J."/>
            <person name="Daugherty S.C."/>
            <person name="DeBoy R.T."/>
            <person name="Durkin A.S."/>
            <person name="Kolonay J.F."/>
            <person name="Madupu R."/>
            <person name="Nelson W.C."/>
            <person name="Ayodeji B."/>
            <person name="Kraul M."/>
            <person name="Shetty J."/>
            <person name="Malek J.A."/>
            <person name="Van Aken S.E."/>
            <person name="Riedmuller S."/>
            <person name="Tettelin H."/>
            <person name="Gill S.R."/>
            <person name="White O."/>
            <person name="Salzberg S.L."/>
            <person name="Hoover D.L."/>
            <person name="Lindler L.E."/>
            <person name="Halling S.M."/>
            <person name="Boyle S.M."/>
            <person name="Fraser C.M."/>
        </authorList>
    </citation>
    <scope>NUCLEOTIDE SEQUENCE [LARGE SCALE GENOMIC DNA]</scope>
    <source>
        <strain>1330</strain>
    </source>
</reference>
<reference key="2">
    <citation type="journal article" date="2011" name="J. Bacteriol.">
        <title>Revised genome sequence of Brucella suis 1330.</title>
        <authorList>
            <person name="Tae H."/>
            <person name="Shallom S."/>
            <person name="Settlage R."/>
            <person name="Preston D."/>
            <person name="Adams L.G."/>
            <person name="Garner H.R."/>
        </authorList>
    </citation>
    <scope>NUCLEOTIDE SEQUENCE [LARGE SCALE GENOMIC DNA]</scope>
    <source>
        <strain>1330</strain>
    </source>
</reference>
<name>FABZ_BRUSU</name>
<evidence type="ECO:0000255" key="1">
    <source>
        <dbReference type="HAMAP-Rule" id="MF_00406"/>
    </source>
</evidence>
<feature type="chain" id="PRO_0000091652" description="3-hydroxyacyl-[acyl-carrier-protein] dehydratase FabZ">
    <location>
        <begin position="1"/>
        <end position="157"/>
    </location>
</feature>
<feature type="active site" evidence="1">
    <location>
        <position position="58"/>
    </location>
</feature>
<dbReference type="EC" id="4.2.1.59" evidence="1"/>
<dbReference type="EMBL" id="AE014291">
    <property type="protein sequence ID" value="AAN30072.1"/>
    <property type="molecule type" value="Genomic_DNA"/>
</dbReference>
<dbReference type="EMBL" id="CP002997">
    <property type="protein sequence ID" value="AEM18490.1"/>
    <property type="molecule type" value="Genomic_DNA"/>
</dbReference>
<dbReference type="RefSeq" id="WP_004688426.1">
    <property type="nucleotide sequence ID" value="NZ_KN046804.1"/>
</dbReference>
<dbReference type="SMR" id="Q8G0E4"/>
<dbReference type="GeneID" id="55590834"/>
<dbReference type="KEGG" id="bms:BR1152"/>
<dbReference type="KEGG" id="bsi:BS1330_I1148"/>
<dbReference type="PATRIC" id="fig|204722.21.peg.1964"/>
<dbReference type="HOGENOM" id="CLU_078912_1_2_5"/>
<dbReference type="Proteomes" id="UP000007104">
    <property type="component" value="Chromosome I"/>
</dbReference>
<dbReference type="GO" id="GO:0005737">
    <property type="term" value="C:cytoplasm"/>
    <property type="evidence" value="ECO:0007669"/>
    <property type="project" value="UniProtKB-SubCell"/>
</dbReference>
<dbReference type="GO" id="GO:0016020">
    <property type="term" value="C:membrane"/>
    <property type="evidence" value="ECO:0007669"/>
    <property type="project" value="GOC"/>
</dbReference>
<dbReference type="GO" id="GO:0019171">
    <property type="term" value="F:(3R)-hydroxyacyl-[acyl-carrier-protein] dehydratase activity"/>
    <property type="evidence" value="ECO:0007669"/>
    <property type="project" value="UniProtKB-EC"/>
</dbReference>
<dbReference type="GO" id="GO:0006633">
    <property type="term" value="P:fatty acid biosynthetic process"/>
    <property type="evidence" value="ECO:0007669"/>
    <property type="project" value="UniProtKB-UniRule"/>
</dbReference>
<dbReference type="GO" id="GO:0009245">
    <property type="term" value="P:lipid A biosynthetic process"/>
    <property type="evidence" value="ECO:0007669"/>
    <property type="project" value="UniProtKB-UniRule"/>
</dbReference>
<dbReference type="CDD" id="cd01288">
    <property type="entry name" value="FabZ"/>
    <property type="match status" value="1"/>
</dbReference>
<dbReference type="FunFam" id="3.10.129.10:FF:000001">
    <property type="entry name" value="3-hydroxyacyl-[acyl-carrier-protein] dehydratase FabZ"/>
    <property type="match status" value="1"/>
</dbReference>
<dbReference type="Gene3D" id="3.10.129.10">
    <property type="entry name" value="Hotdog Thioesterase"/>
    <property type="match status" value="1"/>
</dbReference>
<dbReference type="HAMAP" id="MF_00406">
    <property type="entry name" value="FabZ"/>
    <property type="match status" value="1"/>
</dbReference>
<dbReference type="InterPro" id="IPR013114">
    <property type="entry name" value="FabA_FabZ"/>
</dbReference>
<dbReference type="InterPro" id="IPR010084">
    <property type="entry name" value="FabZ"/>
</dbReference>
<dbReference type="InterPro" id="IPR029069">
    <property type="entry name" value="HotDog_dom_sf"/>
</dbReference>
<dbReference type="NCBIfam" id="TIGR01750">
    <property type="entry name" value="fabZ"/>
    <property type="match status" value="1"/>
</dbReference>
<dbReference type="NCBIfam" id="NF000582">
    <property type="entry name" value="PRK00006.1"/>
    <property type="match status" value="1"/>
</dbReference>
<dbReference type="PANTHER" id="PTHR30272">
    <property type="entry name" value="3-HYDROXYACYL-[ACYL-CARRIER-PROTEIN] DEHYDRATASE"/>
    <property type="match status" value="1"/>
</dbReference>
<dbReference type="PANTHER" id="PTHR30272:SF1">
    <property type="entry name" value="3-HYDROXYACYL-[ACYL-CARRIER-PROTEIN] DEHYDRATASE"/>
    <property type="match status" value="1"/>
</dbReference>
<dbReference type="Pfam" id="PF07977">
    <property type="entry name" value="FabA"/>
    <property type="match status" value="1"/>
</dbReference>
<dbReference type="SUPFAM" id="SSF54637">
    <property type="entry name" value="Thioesterase/thiol ester dehydrase-isomerase"/>
    <property type="match status" value="1"/>
</dbReference>
<organism>
    <name type="scientific">Brucella suis biovar 1 (strain 1330)</name>
    <dbReference type="NCBI Taxonomy" id="204722"/>
    <lineage>
        <taxon>Bacteria</taxon>
        <taxon>Pseudomonadati</taxon>
        <taxon>Pseudomonadota</taxon>
        <taxon>Alphaproteobacteria</taxon>
        <taxon>Hyphomicrobiales</taxon>
        <taxon>Brucellaceae</taxon>
        <taxon>Brucella/Ochrobactrum group</taxon>
        <taxon>Brucella</taxon>
    </lineage>
</organism>
<comment type="function">
    <text evidence="1">Involved in unsaturated fatty acids biosynthesis. Catalyzes the dehydration of short chain beta-hydroxyacyl-ACPs and long chain saturated and unsaturated beta-hydroxyacyl-ACPs.</text>
</comment>
<comment type="catalytic activity">
    <reaction evidence="1">
        <text>a (3R)-hydroxyacyl-[ACP] = a (2E)-enoyl-[ACP] + H2O</text>
        <dbReference type="Rhea" id="RHEA:13097"/>
        <dbReference type="Rhea" id="RHEA-COMP:9925"/>
        <dbReference type="Rhea" id="RHEA-COMP:9945"/>
        <dbReference type="ChEBI" id="CHEBI:15377"/>
        <dbReference type="ChEBI" id="CHEBI:78784"/>
        <dbReference type="ChEBI" id="CHEBI:78827"/>
        <dbReference type="EC" id="4.2.1.59"/>
    </reaction>
</comment>
<comment type="subcellular location">
    <subcellularLocation>
        <location evidence="1">Cytoplasm</location>
    </subcellularLocation>
</comment>
<comment type="similarity">
    <text evidence="1">Belongs to the thioester dehydratase family. FabZ subfamily.</text>
</comment>
<accession>Q8G0E4</accession>
<accession>G0KA74</accession>